<accession>Q0TDU2</accession>
<evidence type="ECO:0000255" key="1">
    <source>
        <dbReference type="HAMAP-Rule" id="MF_02012"/>
    </source>
</evidence>
<keyword id="KW-0131">Cell cycle</keyword>
<keyword id="KW-0132">Cell division</keyword>
<keyword id="KW-0175">Coiled coil</keyword>
<keyword id="KW-0963">Cytoplasm</keyword>
<keyword id="KW-0717">Septation</keyword>
<sequence>MSAQPVDIQIFGRSLRVNCPPDQRDALNQAADDLNQRLQDLKERTRVTNTEQLVFIAALNISYELAQEKAKTRDYAASMEQRIRMLQQTIEQALLEQGRITEKTNQNFE</sequence>
<protein>
    <recommendedName>
        <fullName evidence="1">Cell division protein ZapA</fullName>
    </recommendedName>
    <alternativeName>
        <fullName evidence="1">Z ring-associated protein ZapA</fullName>
    </alternativeName>
</protein>
<proteinExistence type="inferred from homology"/>
<name>ZAPA_ECOL5</name>
<comment type="function">
    <text evidence="1">Activator of cell division through the inhibition of FtsZ GTPase activity, therefore promoting FtsZ assembly into bundles of protofilaments necessary for the formation of the division Z ring. It is recruited early at mid-cell but it is not essential for cell division.</text>
</comment>
<comment type="subunit">
    <text evidence="1">Homodimer. Interacts with FtsZ.</text>
</comment>
<comment type="subcellular location">
    <subcellularLocation>
        <location evidence="1">Cytoplasm</location>
    </subcellularLocation>
    <text evidence="1">Localizes at mid-cell.</text>
</comment>
<comment type="similarity">
    <text evidence="1">Belongs to the ZapA family. Type 1 subfamily.</text>
</comment>
<reference key="1">
    <citation type="journal article" date="2006" name="Mol. Microbiol.">
        <title>Role of pathogenicity island-associated integrases in the genome plasticity of uropathogenic Escherichia coli strain 536.</title>
        <authorList>
            <person name="Hochhut B."/>
            <person name="Wilde C."/>
            <person name="Balling G."/>
            <person name="Middendorf B."/>
            <person name="Dobrindt U."/>
            <person name="Brzuszkiewicz E."/>
            <person name="Gottschalk G."/>
            <person name="Carniel E."/>
            <person name="Hacker J."/>
        </authorList>
    </citation>
    <scope>NUCLEOTIDE SEQUENCE [LARGE SCALE GENOMIC DNA]</scope>
    <source>
        <strain>536 / UPEC</strain>
    </source>
</reference>
<organism>
    <name type="scientific">Escherichia coli O6:K15:H31 (strain 536 / UPEC)</name>
    <dbReference type="NCBI Taxonomy" id="362663"/>
    <lineage>
        <taxon>Bacteria</taxon>
        <taxon>Pseudomonadati</taxon>
        <taxon>Pseudomonadota</taxon>
        <taxon>Gammaproteobacteria</taxon>
        <taxon>Enterobacterales</taxon>
        <taxon>Enterobacteriaceae</taxon>
        <taxon>Escherichia</taxon>
    </lineage>
</organism>
<feature type="chain" id="PRO_0000345649" description="Cell division protein ZapA">
    <location>
        <begin position="1"/>
        <end position="109"/>
    </location>
</feature>
<feature type="coiled-coil region" evidence="1">
    <location>
        <begin position="21"/>
        <end position="99"/>
    </location>
</feature>
<dbReference type="EMBL" id="CP000247">
    <property type="protein sequence ID" value="ABG70887.1"/>
    <property type="molecule type" value="Genomic_DNA"/>
</dbReference>
<dbReference type="RefSeq" id="WP_001276008.1">
    <property type="nucleotide sequence ID" value="NC_008253.1"/>
</dbReference>
<dbReference type="SMR" id="Q0TDU2"/>
<dbReference type="GeneID" id="93779091"/>
<dbReference type="KEGG" id="ecp:ECP_2903"/>
<dbReference type="HOGENOM" id="CLU_116623_3_0_6"/>
<dbReference type="Proteomes" id="UP000009182">
    <property type="component" value="Chromosome"/>
</dbReference>
<dbReference type="GO" id="GO:0032153">
    <property type="term" value="C:cell division site"/>
    <property type="evidence" value="ECO:0007669"/>
    <property type="project" value="TreeGrafter"/>
</dbReference>
<dbReference type="GO" id="GO:0030428">
    <property type="term" value="C:cell septum"/>
    <property type="evidence" value="ECO:0007669"/>
    <property type="project" value="TreeGrafter"/>
</dbReference>
<dbReference type="GO" id="GO:0005829">
    <property type="term" value="C:cytosol"/>
    <property type="evidence" value="ECO:0007669"/>
    <property type="project" value="TreeGrafter"/>
</dbReference>
<dbReference type="GO" id="GO:0005886">
    <property type="term" value="C:plasma membrane"/>
    <property type="evidence" value="ECO:0007669"/>
    <property type="project" value="UniProtKB-UniRule"/>
</dbReference>
<dbReference type="GO" id="GO:0000917">
    <property type="term" value="P:division septum assembly"/>
    <property type="evidence" value="ECO:0007669"/>
    <property type="project" value="UniProtKB-KW"/>
</dbReference>
<dbReference type="GO" id="GO:0043093">
    <property type="term" value="P:FtsZ-dependent cytokinesis"/>
    <property type="evidence" value="ECO:0007669"/>
    <property type="project" value="TreeGrafter"/>
</dbReference>
<dbReference type="GO" id="GO:0000921">
    <property type="term" value="P:septin ring assembly"/>
    <property type="evidence" value="ECO:0007669"/>
    <property type="project" value="TreeGrafter"/>
</dbReference>
<dbReference type="FunFam" id="1.20.5.50:FF:000001">
    <property type="entry name" value="Cell division protein ZapA"/>
    <property type="match status" value="1"/>
</dbReference>
<dbReference type="FunFam" id="3.30.160.880:FF:000001">
    <property type="entry name" value="Cell division protein ZapA"/>
    <property type="match status" value="1"/>
</dbReference>
<dbReference type="Gene3D" id="1.20.5.50">
    <property type="match status" value="1"/>
</dbReference>
<dbReference type="Gene3D" id="3.30.160.880">
    <property type="entry name" value="Cell division protein ZapA protomer, N-terminal domain"/>
    <property type="match status" value="1"/>
</dbReference>
<dbReference type="HAMAP" id="MF_02012">
    <property type="entry name" value="ZapA_type1"/>
    <property type="match status" value="1"/>
</dbReference>
<dbReference type="InterPro" id="IPR007838">
    <property type="entry name" value="Cell_div_ZapA-like"/>
</dbReference>
<dbReference type="InterPro" id="IPR036192">
    <property type="entry name" value="Cell_div_ZapA-like_sf"/>
</dbReference>
<dbReference type="InterPro" id="IPR023771">
    <property type="entry name" value="Cell_div_ZapA_eubact"/>
</dbReference>
<dbReference type="InterPro" id="IPR042233">
    <property type="entry name" value="Cell_div_ZapA_N"/>
</dbReference>
<dbReference type="NCBIfam" id="NF008209">
    <property type="entry name" value="PRK10972.1"/>
    <property type="match status" value="1"/>
</dbReference>
<dbReference type="PANTHER" id="PTHR34981">
    <property type="entry name" value="CELL DIVISION PROTEIN ZAPA"/>
    <property type="match status" value="1"/>
</dbReference>
<dbReference type="PANTHER" id="PTHR34981:SF1">
    <property type="entry name" value="CELL DIVISION PROTEIN ZAPA"/>
    <property type="match status" value="1"/>
</dbReference>
<dbReference type="Pfam" id="PF05164">
    <property type="entry name" value="ZapA"/>
    <property type="match status" value="1"/>
</dbReference>
<dbReference type="SUPFAM" id="SSF102829">
    <property type="entry name" value="Cell division protein ZapA-like"/>
    <property type="match status" value="1"/>
</dbReference>
<gene>
    <name evidence="1" type="primary">zapA</name>
    <name type="ordered locus">ECP_2903</name>
</gene>